<reference key="1">
    <citation type="journal article" date="1997" name="Gene">
        <title>The Agrobacterium tumefaciens motor gene, motA, is in a linked cluster with the flagellar switch protein genes, fliG, fliM and fliN.</title>
        <authorList>
            <person name="Deakin W.J."/>
            <person name="Parker V.E."/>
            <person name="Loake G.J."/>
            <person name="Shaw C.H."/>
        </authorList>
    </citation>
    <scope>NUCLEOTIDE SEQUENCE [GENOMIC DNA]</scope>
</reference>
<reference key="2">
    <citation type="journal article" date="2001" name="Science">
        <title>The genome of the natural genetic engineer Agrobacterium tumefaciens C58.</title>
        <authorList>
            <person name="Wood D.W."/>
            <person name="Setubal J.C."/>
            <person name="Kaul R."/>
            <person name="Monks D.E."/>
            <person name="Kitajima J.P."/>
            <person name="Okura V.K."/>
            <person name="Zhou Y."/>
            <person name="Chen L."/>
            <person name="Wood G.E."/>
            <person name="Almeida N.F. Jr."/>
            <person name="Woo L."/>
            <person name="Chen Y."/>
            <person name="Paulsen I.T."/>
            <person name="Eisen J.A."/>
            <person name="Karp P.D."/>
            <person name="Bovee D. Sr."/>
            <person name="Chapman P."/>
            <person name="Clendenning J."/>
            <person name="Deatherage G."/>
            <person name="Gillet W."/>
            <person name="Grant C."/>
            <person name="Kutyavin T."/>
            <person name="Levy R."/>
            <person name="Li M.-J."/>
            <person name="McClelland E."/>
            <person name="Palmieri A."/>
            <person name="Raymond C."/>
            <person name="Rouse G."/>
            <person name="Saenphimmachak C."/>
            <person name="Wu Z."/>
            <person name="Romero P."/>
            <person name="Gordon D."/>
            <person name="Zhang S."/>
            <person name="Yoo H."/>
            <person name="Tao Y."/>
            <person name="Biddle P."/>
            <person name="Jung M."/>
            <person name="Krespan W."/>
            <person name="Perry M."/>
            <person name="Gordon-Kamm B."/>
            <person name="Liao L."/>
            <person name="Kim S."/>
            <person name="Hendrick C."/>
            <person name="Zhao Z.-Y."/>
            <person name="Dolan M."/>
            <person name="Chumley F."/>
            <person name="Tingey S.V."/>
            <person name="Tomb J.-F."/>
            <person name="Gordon M.P."/>
            <person name="Olson M.V."/>
            <person name="Nester E.W."/>
        </authorList>
    </citation>
    <scope>NUCLEOTIDE SEQUENCE [LARGE SCALE GENOMIC DNA]</scope>
    <source>
        <strain>C58 / ATCC 33970</strain>
    </source>
</reference>
<reference key="3">
    <citation type="journal article" date="2001" name="Science">
        <title>Genome sequence of the plant pathogen and biotechnology agent Agrobacterium tumefaciens C58.</title>
        <authorList>
            <person name="Goodner B."/>
            <person name="Hinkle G."/>
            <person name="Gattung S."/>
            <person name="Miller N."/>
            <person name="Blanchard M."/>
            <person name="Qurollo B."/>
            <person name="Goldman B.S."/>
            <person name="Cao Y."/>
            <person name="Askenazi M."/>
            <person name="Halling C."/>
            <person name="Mullin L."/>
            <person name="Houmiel K."/>
            <person name="Gordon J."/>
            <person name="Vaudin M."/>
            <person name="Iartchouk O."/>
            <person name="Epp A."/>
            <person name="Liu F."/>
            <person name="Wollam C."/>
            <person name="Allinger M."/>
            <person name="Doughty D."/>
            <person name="Scott C."/>
            <person name="Lappas C."/>
            <person name="Markelz B."/>
            <person name="Flanagan C."/>
            <person name="Crowell C."/>
            <person name="Gurson J."/>
            <person name="Lomo C."/>
            <person name="Sear C."/>
            <person name="Strub G."/>
            <person name="Cielo C."/>
            <person name="Slater S."/>
        </authorList>
    </citation>
    <scope>NUCLEOTIDE SEQUENCE [LARGE SCALE GENOMIC DNA]</scope>
    <source>
        <strain>C58 / ATCC 33970</strain>
    </source>
</reference>
<name>FLIN_AGRFC</name>
<comment type="function">
    <text evidence="1">FliN is one of three proteins (FliG, FliN, FliM) that form the rotor-mounted switch complex (C ring), located at the base of the basal body. This complex interacts with the CheY and CheZ chemotaxis proteins, in addition to contacting components of the motor that determine the direction of flagellar rotation (By similarity).</text>
</comment>
<comment type="subcellular location">
    <subcellularLocation>
        <location evidence="2">Cell inner membrane</location>
        <topology evidence="2">Peripheral membrane protein</topology>
        <orientation evidence="2">Cytoplasmic side</orientation>
    </subcellularLocation>
    <subcellularLocation>
        <location evidence="1">Bacterial flagellum basal body</location>
    </subcellularLocation>
</comment>
<comment type="similarity">
    <text evidence="2">Belongs to the FliN/MopA/SpaO family.</text>
</comment>
<dbReference type="EMBL" id="X65584">
    <property type="protein sequence ID" value="CAA46543.1"/>
    <property type="molecule type" value="Genomic_DNA"/>
</dbReference>
<dbReference type="EMBL" id="U63290">
    <property type="protein sequence ID" value="AAC45323.1"/>
    <property type="molecule type" value="Genomic_DNA"/>
</dbReference>
<dbReference type="EMBL" id="U95165">
    <property type="protein sequence ID" value="AAB71780.1"/>
    <property type="molecule type" value="Genomic_DNA"/>
</dbReference>
<dbReference type="EMBL" id="AE007869">
    <property type="protein sequence ID" value="AAK86374.2"/>
    <property type="molecule type" value="Genomic_DNA"/>
</dbReference>
<dbReference type="PIR" id="AE2645">
    <property type="entry name" value="AE2645"/>
</dbReference>
<dbReference type="PIR" id="E97427">
    <property type="entry name" value="E97427"/>
</dbReference>
<dbReference type="PIR" id="S21380">
    <property type="entry name" value="S21380"/>
</dbReference>
<dbReference type="RefSeq" id="NP_353589.2">
    <property type="nucleotide sequence ID" value="NC_003062.2"/>
</dbReference>
<dbReference type="RefSeq" id="WP_006313027.1">
    <property type="nucleotide sequence ID" value="NC_003062.2"/>
</dbReference>
<dbReference type="SMR" id="Q57259"/>
<dbReference type="STRING" id="176299.Atu0562"/>
<dbReference type="EnsemblBacteria" id="AAK86374">
    <property type="protein sequence ID" value="AAK86374"/>
    <property type="gene ID" value="Atu0562"/>
</dbReference>
<dbReference type="GeneID" id="1132600"/>
<dbReference type="KEGG" id="atu:Atu0562"/>
<dbReference type="PATRIC" id="fig|176299.10.peg.558"/>
<dbReference type="eggNOG" id="COG1886">
    <property type="taxonomic scope" value="Bacteria"/>
</dbReference>
<dbReference type="HOGENOM" id="CLU_1401476_0_0_5"/>
<dbReference type="OrthoDB" id="9790303at2"/>
<dbReference type="PhylomeDB" id="Q57259"/>
<dbReference type="BioCyc" id="AGRO:ATU0562-MONOMER"/>
<dbReference type="Proteomes" id="UP000000813">
    <property type="component" value="Chromosome circular"/>
</dbReference>
<dbReference type="GO" id="GO:0009425">
    <property type="term" value="C:bacterial-type flagellum basal body"/>
    <property type="evidence" value="ECO:0007669"/>
    <property type="project" value="UniProtKB-SubCell"/>
</dbReference>
<dbReference type="GO" id="GO:0005886">
    <property type="term" value="C:plasma membrane"/>
    <property type="evidence" value="ECO:0007669"/>
    <property type="project" value="UniProtKB-SubCell"/>
</dbReference>
<dbReference type="GO" id="GO:0003774">
    <property type="term" value="F:cytoskeletal motor activity"/>
    <property type="evidence" value="ECO:0007669"/>
    <property type="project" value="InterPro"/>
</dbReference>
<dbReference type="GO" id="GO:0071973">
    <property type="term" value="P:bacterial-type flagellum-dependent cell motility"/>
    <property type="evidence" value="ECO:0007669"/>
    <property type="project" value="InterPro"/>
</dbReference>
<dbReference type="GO" id="GO:0006935">
    <property type="term" value="P:chemotaxis"/>
    <property type="evidence" value="ECO:0000315"/>
    <property type="project" value="GO_Central"/>
</dbReference>
<dbReference type="FunFam" id="2.30.330.10:FF:000008">
    <property type="entry name" value="Flagellar motor switch protein FliN"/>
    <property type="match status" value="1"/>
</dbReference>
<dbReference type="Gene3D" id="2.30.330.10">
    <property type="entry name" value="SpoA-like"/>
    <property type="match status" value="1"/>
</dbReference>
<dbReference type="InterPro" id="IPR012826">
    <property type="entry name" value="FliN"/>
</dbReference>
<dbReference type="InterPro" id="IPR001543">
    <property type="entry name" value="FliN-like_C"/>
</dbReference>
<dbReference type="InterPro" id="IPR051469">
    <property type="entry name" value="FliN/MopA/SpaO"/>
</dbReference>
<dbReference type="InterPro" id="IPR001172">
    <property type="entry name" value="FliN_T3SS_HrcQb"/>
</dbReference>
<dbReference type="InterPro" id="IPR036429">
    <property type="entry name" value="SpoA-like_sf"/>
</dbReference>
<dbReference type="NCBIfam" id="TIGR02480">
    <property type="entry name" value="fliN"/>
    <property type="match status" value="1"/>
</dbReference>
<dbReference type="PANTHER" id="PTHR43484">
    <property type="match status" value="1"/>
</dbReference>
<dbReference type="PANTHER" id="PTHR43484:SF1">
    <property type="entry name" value="FLAGELLAR MOTOR SWITCH PROTEIN FLIN"/>
    <property type="match status" value="1"/>
</dbReference>
<dbReference type="Pfam" id="PF01052">
    <property type="entry name" value="FliMN_C"/>
    <property type="match status" value="1"/>
</dbReference>
<dbReference type="PRINTS" id="PR00956">
    <property type="entry name" value="FLGMOTORFLIN"/>
</dbReference>
<dbReference type="SUPFAM" id="SSF101801">
    <property type="entry name" value="Surface presentation of antigens (SPOA)"/>
    <property type="match status" value="1"/>
</dbReference>
<sequence length="179" mass="18803">MATKKTPVTDDAALPSFEDGVDLDQAIGDLRGVLKTDAEGSLSDFGDFGDFGSTDEVSTDNDLSAFGGGAADFAMDDFAAAPQVAGVKAPLGSGLSENMEMIMDIPIDVQIVLGTSRMLVSGLMSLEEGATIALDRKIGEPVEIMVNGRRIARGEITVLEDDDTRFGVKLIEVLSTRKA</sequence>
<gene>
    <name type="primary">fliN</name>
    <name type="synonym">filN</name>
    <name type="ordered locus">Atu0562</name>
    <name type="ORF">AGR_C_988</name>
</gene>
<accession>Q57259</accession>
<evidence type="ECO:0000250" key="1"/>
<evidence type="ECO:0000305" key="2"/>
<protein>
    <recommendedName>
        <fullName>Flagellar motor switch protein FliN</fullName>
    </recommendedName>
</protein>
<keyword id="KW-0975">Bacterial flagellum</keyword>
<keyword id="KW-0997">Cell inner membrane</keyword>
<keyword id="KW-1003">Cell membrane</keyword>
<keyword id="KW-0145">Chemotaxis</keyword>
<keyword id="KW-0283">Flagellar rotation</keyword>
<keyword id="KW-0472">Membrane</keyword>
<keyword id="KW-1185">Reference proteome</keyword>
<feature type="chain" id="PRO_0000184111" description="Flagellar motor switch protein FliN">
    <location>
        <begin position="1"/>
        <end position="179"/>
    </location>
</feature>
<organism>
    <name type="scientific">Agrobacterium fabrum (strain C58 / ATCC 33970)</name>
    <name type="common">Agrobacterium tumefaciens (strain C58)</name>
    <dbReference type="NCBI Taxonomy" id="176299"/>
    <lineage>
        <taxon>Bacteria</taxon>
        <taxon>Pseudomonadati</taxon>
        <taxon>Pseudomonadota</taxon>
        <taxon>Alphaproteobacteria</taxon>
        <taxon>Hyphomicrobiales</taxon>
        <taxon>Rhizobiaceae</taxon>
        <taxon>Rhizobium/Agrobacterium group</taxon>
        <taxon>Agrobacterium</taxon>
        <taxon>Agrobacterium tumefaciens complex</taxon>
    </lineage>
</organism>
<proteinExistence type="inferred from homology"/>